<reference key="1">
    <citation type="journal article" date="2005" name="J. Bacteriol.">
        <title>Insights on evolution of virulence and resistance from the complete genome analysis of an early methicillin-resistant Staphylococcus aureus strain and a biofilm-producing methicillin-resistant Staphylococcus epidermidis strain.</title>
        <authorList>
            <person name="Gill S.R."/>
            <person name="Fouts D.E."/>
            <person name="Archer G.L."/>
            <person name="Mongodin E.F."/>
            <person name="DeBoy R.T."/>
            <person name="Ravel J."/>
            <person name="Paulsen I.T."/>
            <person name="Kolonay J.F."/>
            <person name="Brinkac L.M."/>
            <person name="Beanan M.J."/>
            <person name="Dodson R.J."/>
            <person name="Daugherty S.C."/>
            <person name="Madupu R."/>
            <person name="Angiuoli S.V."/>
            <person name="Durkin A.S."/>
            <person name="Haft D.H."/>
            <person name="Vamathevan J.J."/>
            <person name="Khouri H."/>
            <person name="Utterback T.R."/>
            <person name="Lee C."/>
            <person name="Dimitrov G."/>
            <person name="Jiang L."/>
            <person name="Qin H."/>
            <person name="Weidman J."/>
            <person name="Tran K."/>
            <person name="Kang K.H."/>
            <person name="Hance I.R."/>
            <person name="Nelson K.E."/>
            <person name="Fraser C.M."/>
        </authorList>
    </citation>
    <scope>NUCLEOTIDE SEQUENCE [LARGE SCALE GENOMIC DNA]</scope>
    <source>
        <strain>ATCC 35984 / DSM 28319 / BCRC 17069 / CCUG 31568 / BM 3577 / RP62A</strain>
    </source>
</reference>
<organism>
    <name type="scientific">Staphylococcus epidermidis (strain ATCC 35984 / DSM 28319 / BCRC 17069 / CCUG 31568 / BM 3577 / RP62A)</name>
    <dbReference type="NCBI Taxonomy" id="176279"/>
    <lineage>
        <taxon>Bacteria</taxon>
        <taxon>Bacillati</taxon>
        <taxon>Bacillota</taxon>
        <taxon>Bacilli</taxon>
        <taxon>Bacillales</taxon>
        <taxon>Staphylococcaceae</taxon>
        <taxon>Staphylococcus</taxon>
    </lineage>
</organism>
<sequence>MNLIPTVIETTNRGERAYDIYSRLLKDRIIMLGSQIDDNVANSIVSQLLFLQAQDSEKDIYLYINSPGGSVTAGFAIYDTIQHIKPDVQTICIGMAASMGSFLLAAGAKGKRFALPNAEVMIHQPLGGAQGQATEIEIAANHILKTREKLNRILSERTGQSIEKIQQDTDRDNFLTAAEAKEYGLIDEVMEPEK</sequence>
<feature type="chain" id="PRO_0000179656" description="ATP-dependent Clp protease proteolytic subunit">
    <location>
        <begin position="1"/>
        <end position="194"/>
    </location>
</feature>
<feature type="active site" description="Nucleophile" evidence="1">
    <location>
        <position position="98"/>
    </location>
</feature>
<feature type="active site" evidence="1">
    <location>
        <position position="123"/>
    </location>
</feature>
<feature type="helix" evidence="2">
    <location>
        <begin position="20"/>
        <end position="26"/>
    </location>
</feature>
<feature type="strand" evidence="2">
    <location>
        <begin position="29"/>
        <end position="32"/>
    </location>
</feature>
<feature type="helix" evidence="2">
    <location>
        <begin position="38"/>
        <end position="54"/>
    </location>
</feature>
<feature type="strand" evidence="2">
    <location>
        <begin position="56"/>
        <end position="58"/>
    </location>
</feature>
<feature type="strand" evidence="2">
    <location>
        <begin position="60"/>
        <end position="66"/>
    </location>
</feature>
<feature type="helix" evidence="2">
    <location>
        <begin position="71"/>
        <end position="83"/>
    </location>
</feature>
<feature type="strand" evidence="2">
    <location>
        <begin position="84"/>
        <end position="86"/>
    </location>
</feature>
<feature type="strand" evidence="2">
    <location>
        <begin position="88"/>
        <end position="97"/>
    </location>
</feature>
<feature type="helix" evidence="2">
    <location>
        <begin position="99"/>
        <end position="105"/>
    </location>
</feature>
<feature type="strand" evidence="2">
    <location>
        <begin position="112"/>
        <end position="114"/>
    </location>
</feature>
<feature type="strand" evidence="2">
    <location>
        <begin position="119"/>
        <end position="122"/>
    </location>
</feature>
<feature type="strand" evidence="2">
    <location>
        <begin position="126"/>
        <end position="132"/>
    </location>
</feature>
<feature type="helix" evidence="2">
    <location>
        <begin position="133"/>
        <end position="158"/>
    </location>
</feature>
<feature type="helix" evidence="2">
    <location>
        <begin position="162"/>
        <end position="169"/>
    </location>
</feature>
<feature type="strand" evidence="2">
    <location>
        <begin position="173"/>
        <end position="176"/>
    </location>
</feature>
<feature type="helix" evidence="2">
    <location>
        <begin position="177"/>
        <end position="182"/>
    </location>
</feature>
<feature type="strand" evidence="2">
    <location>
        <begin position="187"/>
        <end position="189"/>
    </location>
</feature>
<accession>Q5HQW0</accession>
<protein>
    <recommendedName>
        <fullName evidence="1">ATP-dependent Clp protease proteolytic subunit</fullName>
        <ecNumber evidence="1">3.4.21.92</ecNumber>
    </recommendedName>
    <alternativeName>
        <fullName evidence="1">Endopeptidase Clp</fullName>
    </alternativeName>
</protein>
<gene>
    <name evidence="1" type="primary">clpP</name>
    <name type="ordered locus">SERP0436</name>
</gene>
<keyword id="KW-0002">3D-structure</keyword>
<keyword id="KW-0963">Cytoplasm</keyword>
<keyword id="KW-0378">Hydrolase</keyword>
<keyword id="KW-0645">Protease</keyword>
<keyword id="KW-1185">Reference proteome</keyword>
<keyword id="KW-0720">Serine protease</keyword>
<dbReference type="EC" id="3.4.21.92" evidence="1"/>
<dbReference type="EMBL" id="CP000029">
    <property type="protein sequence ID" value="AAW53858.1"/>
    <property type="molecule type" value="Genomic_DNA"/>
</dbReference>
<dbReference type="RefSeq" id="WP_001829659.1">
    <property type="nucleotide sequence ID" value="NC_002976.3"/>
</dbReference>
<dbReference type="PDB" id="8CJ4">
    <property type="method" value="X-ray"/>
    <property type="resolution" value="1.90 A"/>
    <property type="chains" value="A/B/C/D/E/F/G/H/I/J/K/L/M/N=1-193"/>
</dbReference>
<dbReference type="PDB" id="8QYF">
    <property type="method" value="X-ray"/>
    <property type="resolution" value="2.33 A"/>
    <property type="chains" value="A/B/C/D/E/F/G/H/I/J/K/L/M/N=1-194"/>
</dbReference>
<dbReference type="PDBsum" id="8CJ4"/>
<dbReference type="PDBsum" id="8QYF"/>
<dbReference type="SMR" id="Q5HQW0"/>
<dbReference type="STRING" id="176279.SERP0436"/>
<dbReference type="MEROPS" id="S14.001"/>
<dbReference type="GeneID" id="50019301"/>
<dbReference type="KEGG" id="ser:SERP0436"/>
<dbReference type="eggNOG" id="COG0740">
    <property type="taxonomic scope" value="Bacteria"/>
</dbReference>
<dbReference type="HOGENOM" id="CLU_058707_3_2_9"/>
<dbReference type="Proteomes" id="UP000000531">
    <property type="component" value="Chromosome"/>
</dbReference>
<dbReference type="GO" id="GO:0005737">
    <property type="term" value="C:cytoplasm"/>
    <property type="evidence" value="ECO:0007669"/>
    <property type="project" value="UniProtKB-SubCell"/>
</dbReference>
<dbReference type="GO" id="GO:0009368">
    <property type="term" value="C:endopeptidase Clp complex"/>
    <property type="evidence" value="ECO:0007669"/>
    <property type="project" value="TreeGrafter"/>
</dbReference>
<dbReference type="GO" id="GO:0004176">
    <property type="term" value="F:ATP-dependent peptidase activity"/>
    <property type="evidence" value="ECO:0007669"/>
    <property type="project" value="InterPro"/>
</dbReference>
<dbReference type="GO" id="GO:0051117">
    <property type="term" value="F:ATPase binding"/>
    <property type="evidence" value="ECO:0007669"/>
    <property type="project" value="TreeGrafter"/>
</dbReference>
<dbReference type="GO" id="GO:0004252">
    <property type="term" value="F:serine-type endopeptidase activity"/>
    <property type="evidence" value="ECO:0007669"/>
    <property type="project" value="UniProtKB-UniRule"/>
</dbReference>
<dbReference type="GO" id="GO:0006515">
    <property type="term" value="P:protein quality control for misfolded or incompletely synthesized proteins"/>
    <property type="evidence" value="ECO:0007669"/>
    <property type="project" value="TreeGrafter"/>
</dbReference>
<dbReference type="CDD" id="cd07017">
    <property type="entry name" value="S14_ClpP_2"/>
    <property type="match status" value="1"/>
</dbReference>
<dbReference type="FunFam" id="3.90.226.10:FF:000001">
    <property type="entry name" value="ATP-dependent Clp protease proteolytic subunit"/>
    <property type="match status" value="1"/>
</dbReference>
<dbReference type="Gene3D" id="3.90.226.10">
    <property type="entry name" value="2-enoyl-CoA Hydratase, Chain A, domain 1"/>
    <property type="match status" value="1"/>
</dbReference>
<dbReference type="HAMAP" id="MF_00444">
    <property type="entry name" value="ClpP"/>
    <property type="match status" value="1"/>
</dbReference>
<dbReference type="InterPro" id="IPR001907">
    <property type="entry name" value="ClpP"/>
</dbReference>
<dbReference type="InterPro" id="IPR029045">
    <property type="entry name" value="ClpP/crotonase-like_dom_sf"/>
</dbReference>
<dbReference type="InterPro" id="IPR023562">
    <property type="entry name" value="ClpP/TepA"/>
</dbReference>
<dbReference type="InterPro" id="IPR033135">
    <property type="entry name" value="ClpP_His_AS"/>
</dbReference>
<dbReference type="InterPro" id="IPR018215">
    <property type="entry name" value="ClpP_Ser_AS"/>
</dbReference>
<dbReference type="NCBIfam" id="TIGR00493">
    <property type="entry name" value="clpP"/>
    <property type="match status" value="1"/>
</dbReference>
<dbReference type="NCBIfam" id="NF001368">
    <property type="entry name" value="PRK00277.1"/>
    <property type="match status" value="1"/>
</dbReference>
<dbReference type="NCBIfam" id="NF009205">
    <property type="entry name" value="PRK12553.1"/>
    <property type="match status" value="1"/>
</dbReference>
<dbReference type="PANTHER" id="PTHR10381">
    <property type="entry name" value="ATP-DEPENDENT CLP PROTEASE PROTEOLYTIC SUBUNIT"/>
    <property type="match status" value="1"/>
</dbReference>
<dbReference type="PANTHER" id="PTHR10381:SF70">
    <property type="entry name" value="ATP-DEPENDENT CLP PROTEASE PROTEOLYTIC SUBUNIT"/>
    <property type="match status" value="1"/>
</dbReference>
<dbReference type="Pfam" id="PF00574">
    <property type="entry name" value="CLP_protease"/>
    <property type="match status" value="1"/>
</dbReference>
<dbReference type="PRINTS" id="PR00127">
    <property type="entry name" value="CLPPROTEASEP"/>
</dbReference>
<dbReference type="SUPFAM" id="SSF52096">
    <property type="entry name" value="ClpP/crotonase"/>
    <property type="match status" value="1"/>
</dbReference>
<dbReference type="PROSITE" id="PS00382">
    <property type="entry name" value="CLP_PROTEASE_HIS"/>
    <property type="match status" value="1"/>
</dbReference>
<dbReference type="PROSITE" id="PS00381">
    <property type="entry name" value="CLP_PROTEASE_SER"/>
    <property type="match status" value="1"/>
</dbReference>
<proteinExistence type="evidence at protein level"/>
<name>CLPP_STAEQ</name>
<comment type="function">
    <text evidence="1">Cleaves peptides in various proteins in a process that requires ATP hydrolysis. Has a chymotrypsin-like activity. Plays a major role in the degradation of misfolded proteins.</text>
</comment>
<comment type="catalytic activity">
    <reaction evidence="1">
        <text>Hydrolysis of proteins to small peptides in the presence of ATP and magnesium. alpha-casein is the usual test substrate. In the absence of ATP, only oligopeptides shorter than five residues are hydrolyzed (such as succinyl-Leu-Tyr-|-NHMec, and Leu-Tyr-Leu-|-Tyr-Trp, in which cleavage of the -Tyr-|-Leu- and -Tyr-|-Trp bonds also occurs).</text>
        <dbReference type="EC" id="3.4.21.92"/>
    </reaction>
</comment>
<comment type="subunit">
    <text evidence="1">Fourteen ClpP subunits assemble into 2 heptameric rings which stack back to back to give a disk-like structure with a central cavity, resembling the structure of eukaryotic proteasomes.</text>
</comment>
<comment type="subcellular location">
    <subcellularLocation>
        <location evidence="1">Cytoplasm</location>
    </subcellularLocation>
</comment>
<comment type="similarity">
    <text evidence="1">Belongs to the peptidase S14 family.</text>
</comment>
<evidence type="ECO:0000255" key="1">
    <source>
        <dbReference type="HAMAP-Rule" id="MF_00444"/>
    </source>
</evidence>
<evidence type="ECO:0007829" key="2">
    <source>
        <dbReference type="PDB" id="8CJ4"/>
    </source>
</evidence>